<organism>
    <name type="scientific">Protochlamydia amoebophila (strain UWE25)</name>
    <dbReference type="NCBI Taxonomy" id="264201"/>
    <lineage>
        <taxon>Bacteria</taxon>
        <taxon>Pseudomonadati</taxon>
        <taxon>Chlamydiota</taxon>
        <taxon>Chlamydiia</taxon>
        <taxon>Parachlamydiales</taxon>
        <taxon>Parachlamydiaceae</taxon>
        <taxon>Candidatus Protochlamydia</taxon>
    </lineage>
</organism>
<proteinExistence type="inferred from homology"/>
<feature type="chain" id="PRO_0000111894" description="Protein-L-isoaspartate O-methyltransferase">
    <location>
        <begin position="1"/>
        <end position="210"/>
    </location>
</feature>
<feature type="active site" evidence="1">
    <location>
        <position position="52"/>
    </location>
</feature>
<comment type="function">
    <text evidence="1">Catalyzes the methyl esterification of L-isoaspartyl residues in peptides and proteins that result from spontaneous decomposition of normal L-aspartyl and L-asparaginyl residues. It plays a role in the repair and/or degradation of damaged proteins.</text>
</comment>
<comment type="catalytic activity">
    <reaction evidence="1">
        <text>[protein]-L-isoaspartate + S-adenosyl-L-methionine = [protein]-L-isoaspartate alpha-methyl ester + S-adenosyl-L-homocysteine</text>
        <dbReference type="Rhea" id="RHEA:12705"/>
        <dbReference type="Rhea" id="RHEA-COMP:12143"/>
        <dbReference type="Rhea" id="RHEA-COMP:12144"/>
        <dbReference type="ChEBI" id="CHEBI:57856"/>
        <dbReference type="ChEBI" id="CHEBI:59789"/>
        <dbReference type="ChEBI" id="CHEBI:90596"/>
        <dbReference type="ChEBI" id="CHEBI:90598"/>
        <dbReference type="EC" id="2.1.1.77"/>
    </reaction>
</comment>
<comment type="subcellular location">
    <subcellularLocation>
        <location evidence="1">Cytoplasm</location>
    </subcellularLocation>
</comment>
<comment type="similarity">
    <text evidence="1">Belongs to the methyltransferase superfamily. L-isoaspartyl/D-aspartyl protein methyltransferase family.</text>
</comment>
<keyword id="KW-0963">Cytoplasm</keyword>
<keyword id="KW-0489">Methyltransferase</keyword>
<keyword id="KW-1185">Reference proteome</keyword>
<keyword id="KW-0949">S-adenosyl-L-methionine</keyword>
<keyword id="KW-0808">Transferase</keyword>
<dbReference type="EC" id="2.1.1.77" evidence="1"/>
<dbReference type="EMBL" id="BX908798">
    <property type="protein sequence ID" value="CAF23580.1"/>
    <property type="molecule type" value="Genomic_DNA"/>
</dbReference>
<dbReference type="SMR" id="Q6MCW9"/>
<dbReference type="STRING" id="264201.pc0856"/>
<dbReference type="eggNOG" id="COG2518">
    <property type="taxonomic scope" value="Bacteria"/>
</dbReference>
<dbReference type="HOGENOM" id="CLU_055432_2_0_0"/>
<dbReference type="Proteomes" id="UP000000529">
    <property type="component" value="Chromosome"/>
</dbReference>
<dbReference type="GO" id="GO:0005737">
    <property type="term" value="C:cytoplasm"/>
    <property type="evidence" value="ECO:0007669"/>
    <property type="project" value="UniProtKB-SubCell"/>
</dbReference>
<dbReference type="GO" id="GO:0004719">
    <property type="term" value="F:protein-L-isoaspartate (D-aspartate) O-methyltransferase activity"/>
    <property type="evidence" value="ECO:0007669"/>
    <property type="project" value="UniProtKB-UniRule"/>
</dbReference>
<dbReference type="GO" id="GO:0032259">
    <property type="term" value="P:methylation"/>
    <property type="evidence" value="ECO:0007669"/>
    <property type="project" value="UniProtKB-KW"/>
</dbReference>
<dbReference type="GO" id="GO:0036211">
    <property type="term" value="P:protein modification process"/>
    <property type="evidence" value="ECO:0007669"/>
    <property type="project" value="UniProtKB-UniRule"/>
</dbReference>
<dbReference type="GO" id="GO:0030091">
    <property type="term" value="P:protein repair"/>
    <property type="evidence" value="ECO:0007669"/>
    <property type="project" value="UniProtKB-UniRule"/>
</dbReference>
<dbReference type="CDD" id="cd02440">
    <property type="entry name" value="AdoMet_MTases"/>
    <property type="match status" value="1"/>
</dbReference>
<dbReference type="FunFam" id="3.40.50.150:FF:000010">
    <property type="entry name" value="Protein-L-isoaspartate O-methyltransferase"/>
    <property type="match status" value="1"/>
</dbReference>
<dbReference type="Gene3D" id="3.40.50.150">
    <property type="entry name" value="Vaccinia Virus protein VP39"/>
    <property type="match status" value="1"/>
</dbReference>
<dbReference type="HAMAP" id="MF_00090">
    <property type="entry name" value="PIMT"/>
    <property type="match status" value="1"/>
</dbReference>
<dbReference type="InterPro" id="IPR000682">
    <property type="entry name" value="PCMT"/>
</dbReference>
<dbReference type="InterPro" id="IPR029063">
    <property type="entry name" value="SAM-dependent_MTases_sf"/>
</dbReference>
<dbReference type="NCBIfam" id="TIGR00080">
    <property type="entry name" value="pimt"/>
    <property type="match status" value="1"/>
</dbReference>
<dbReference type="NCBIfam" id="NF001453">
    <property type="entry name" value="PRK00312.1"/>
    <property type="match status" value="1"/>
</dbReference>
<dbReference type="PANTHER" id="PTHR11579">
    <property type="entry name" value="PROTEIN-L-ISOASPARTATE O-METHYLTRANSFERASE"/>
    <property type="match status" value="1"/>
</dbReference>
<dbReference type="PANTHER" id="PTHR11579:SF0">
    <property type="entry name" value="PROTEIN-L-ISOASPARTATE(D-ASPARTATE) O-METHYLTRANSFERASE"/>
    <property type="match status" value="1"/>
</dbReference>
<dbReference type="Pfam" id="PF01135">
    <property type="entry name" value="PCMT"/>
    <property type="match status" value="1"/>
</dbReference>
<dbReference type="SUPFAM" id="SSF53335">
    <property type="entry name" value="S-adenosyl-L-methionine-dependent methyltransferases"/>
    <property type="match status" value="1"/>
</dbReference>
<dbReference type="PROSITE" id="PS01279">
    <property type="entry name" value="PCMT"/>
    <property type="match status" value="1"/>
</dbReference>
<gene>
    <name evidence="1" type="primary">pcm</name>
    <name type="ordered locus">pc0856</name>
</gene>
<sequence length="210" mass="23084">MVEKQIAARGIQDPRVLEAMGKVPRERFVSEHIAPLAYEDRPLSIDEGQTISQPFIVAVMAQQAQITPQDKVLEIGTGSGYSAAILSQLASHVYSMERYPKLAELAKKRLQEFGYNNVTVSVGDGSLGWEEFAPYEVIIVTAGGPQIPPSLLKQLAISGRLVIPVGPSLESQQLMRVMREDADHYRYENLGSVQFVPLVGKEGWQTTSSS</sequence>
<protein>
    <recommendedName>
        <fullName evidence="1">Protein-L-isoaspartate O-methyltransferase</fullName>
        <ecNumber evidence="1">2.1.1.77</ecNumber>
    </recommendedName>
    <alternativeName>
        <fullName evidence="1">L-isoaspartyl protein carboxyl methyltransferase</fullName>
    </alternativeName>
    <alternativeName>
        <fullName evidence="1">Protein L-isoaspartyl methyltransferase</fullName>
    </alternativeName>
    <alternativeName>
        <fullName evidence="1">Protein-beta-aspartate methyltransferase</fullName>
        <shortName evidence="1">PIMT</shortName>
    </alternativeName>
</protein>
<name>PIMT_PARUW</name>
<evidence type="ECO:0000255" key="1">
    <source>
        <dbReference type="HAMAP-Rule" id="MF_00090"/>
    </source>
</evidence>
<reference key="1">
    <citation type="journal article" date="2004" name="Science">
        <title>Illuminating the evolutionary history of chlamydiae.</title>
        <authorList>
            <person name="Horn M."/>
            <person name="Collingro A."/>
            <person name="Schmitz-Esser S."/>
            <person name="Beier C.L."/>
            <person name="Purkhold U."/>
            <person name="Fartmann B."/>
            <person name="Brandt P."/>
            <person name="Nyakatura G.J."/>
            <person name="Droege M."/>
            <person name="Frishman D."/>
            <person name="Rattei T."/>
            <person name="Mewes H.-W."/>
            <person name="Wagner M."/>
        </authorList>
    </citation>
    <scope>NUCLEOTIDE SEQUENCE [LARGE SCALE GENOMIC DNA]</scope>
    <source>
        <strain>UWE25</strain>
    </source>
</reference>
<accession>Q6MCW9</accession>